<dbReference type="EC" id="2.7.11.5" evidence="1"/>
<dbReference type="EC" id="3.1.3.-" evidence="1"/>
<dbReference type="EMBL" id="CP001025">
    <property type="protein sequence ID" value="ACB65314.1"/>
    <property type="molecule type" value="Genomic_DNA"/>
</dbReference>
<dbReference type="RefSeq" id="WP_012364824.1">
    <property type="nucleotide sequence ID" value="NC_010551.1"/>
</dbReference>
<dbReference type="SMR" id="B1YNR4"/>
<dbReference type="KEGG" id="bac:BamMC406_2838"/>
<dbReference type="HOGENOM" id="CLU_033804_1_1_4"/>
<dbReference type="OrthoDB" id="5287793at2"/>
<dbReference type="Proteomes" id="UP000001680">
    <property type="component" value="Chromosome 1"/>
</dbReference>
<dbReference type="GO" id="GO:0005737">
    <property type="term" value="C:cytoplasm"/>
    <property type="evidence" value="ECO:0007669"/>
    <property type="project" value="UniProtKB-SubCell"/>
</dbReference>
<dbReference type="GO" id="GO:0008772">
    <property type="term" value="F:[isocitrate dehydrogenase (NADP+)] kinase activity"/>
    <property type="evidence" value="ECO:0007669"/>
    <property type="project" value="UniProtKB-UniRule"/>
</dbReference>
<dbReference type="GO" id="GO:0016208">
    <property type="term" value="F:AMP binding"/>
    <property type="evidence" value="ECO:0007669"/>
    <property type="project" value="TreeGrafter"/>
</dbReference>
<dbReference type="GO" id="GO:0005524">
    <property type="term" value="F:ATP binding"/>
    <property type="evidence" value="ECO:0007669"/>
    <property type="project" value="UniProtKB-UniRule"/>
</dbReference>
<dbReference type="GO" id="GO:0004721">
    <property type="term" value="F:phosphoprotein phosphatase activity"/>
    <property type="evidence" value="ECO:0007669"/>
    <property type="project" value="UniProtKB-KW"/>
</dbReference>
<dbReference type="GO" id="GO:0004674">
    <property type="term" value="F:protein serine/threonine kinase activity"/>
    <property type="evidence" value="ECO:0007669"/>
    <property type="project" value="UniProtKB-KW"/>
</dbReference>
<dbReference type="GO" id="GO:0006006">
    <property type="term" value="P:glucose metabolic process"/>
    <property type="evidence" value="ECO:0007669"/>
    <property type="project" value="InterPro"/>
</dbReference>
<dbReference type="GO" id="GO:0006097">
    <property type="term" value="P:glyoxylate cycle"/>
    <property type="evidence" value="ECO:0007669"/>
    <property type="project" value="UniProtKB-UniRule"/>
</dbReference>
<dbReference type="GO" id="GO:0006099">
    <property type="term" value="P:tricarboxylic acid cycle"/>
    <property type="evidence" value="ECO:0007669"/>
    <property type="project" value="UniProtKB-UniRule"/>
</dbReference>
<dbReference type="HAMAP" id="MF_00747">
    <property type="entry name" value="AceK"/>
    <property type="match status" value="1"/>
</dbReference>
<dbReference type="InterPro" id="IPR046855">
    <property type="entry name" value="AceK_kinase"/>
</dbReference>
<dbReference type="InterPro" id="IPR046854">
    <property type="entry name" value="AceK_regulatory"/>
</dbReference>
<dbReference type="InterPro" id="IPR010452">
    <property type="entry name" value="Isocitrate_DH_AceK"/>
</dbReference>
<dbReference type="NCBIfam" id="NF002804">
    <property type="entry name" value="PRK02946.1"/>
    <property type="match status" value="1"/>
</dbReference>
<dbReference type="PANTHER" id="PTHR39559">
    <property type="match status" value="1"/>
</dbReference>
<dbReference type="PANTHER" id="PTHR39559:SF1">
    <property type="entry name" value="ISOCITRATE DEHYDROGENASE KINASE_PHOSPHATASE"/>
    <property type="match status" value="1"/>
</dbReference>
<dbReference type="Pfam" id="PF06315">
    <property type="entry name" value="AceK_kinase"/>
    <property type="match status" value="1"/>
</dbReference>
<dbReference type="Pfam" id="PF20423">
    <property type="entry name" value="AceK_regulatory"/>
    <property type="match status" value="1"/>
</dbReference>
<dbReference type="PIRSF" id="PIRSF000719">
    <property type="entry name" value="AceK"/>
    <property type="match status" value="1"/>
</dbReference>
<comment type="function">
    <text evidence="1">Bifunctional enzyme which can phosphorylate or dephosphorylate isocitrate dehydrogenase (IDH) on a specific serine residue. This is a regulatory mechanism which enables bacteria to bypass the Krebs cycle via the glyoxylate shunt in response to the source of carbon. When bacteria are grown on glucose, IDH is fully active and unphosphorylated, but when grown on acetate or ethanol, the activity of IDH declines drastically concomitant with its phosphorylation.</text>
</comment>
<comment type="catalytic activity">
    <reaction evidence="1">
        <text>L-seryl-[isocitrate dehydrogenase] + ATP = O-phospho-L-seryl-[isocitrate dehydrogenase] + ADP + H(+)</text>
        <dbReference type="Rhea" id="RHEA:43540"/>
        <dbReference type="Rhea" id="RHEA-COMP:10605"/>
        <dbReference type="Rhea" id="RHEA-COMP:10606"/>
        <dbReference type="ChEBI" id="CHEBI:15378"/>
        <dbReference type="ChEBI" id="CHEBI:29999"/>
        <dbReference type="ChEBI" id="CHEBI:30616"/>
        <dbReference type="ChEBI" id="CHEBI:83421"/>
        <dbReference type="ChEBI" id="CHEBI:456216"/>
        <dbReference type="EC" id="2.7.11.5"/>
    </reaction>
</comment>
<comment type="subcellular location">
    <subcellularLocation>
        <location evidence="1">Cytoplasm</location>
    </subcellularLocation>
</comment>
<comment type="similarity">
    <text evidence="1">Belongs to the AceK family.</text>
</comment>
<proteinExistence type="inferred from homology"/>
<sequence>MNHFPKLLSSQIGFDVAQTMLENFDRHYRIFREAAVDAKTLYERADWHGLQRLARERITSYDDRVQECVEVLQDEYDAENIDDEVWQQIKLHYIGLLTSHRQPECAETFFNSVCCKILHRSYFNNDFIFVRPAISTEYLENDEPAAKPTYRAYYPGTDGLAATLERIVTNFQLEPPFEDLTRDIGCVMQAITDEFGEFDAAPNFQIHVLSSLFFRNKSAYIVGRIINADRVLPFAVPIRHVRPGLLALDTVLLRRDLLQIIFSFSHSYFLVDMGVPSAYVDFLCTIMPGKPKAEIYTSVGLQKQGKNLFYRDLLHHLSHSSDRFIIAPGIKGLVMLVFTLPSFPYVFKIIKDHFPPPKETTREQIMEKYQLVKRHDRLGRMADTLEYSSVALPISRLDHALVRELEKEVPSLLEYEDGNLVIKHLYIERRMIPLNLYLQNGTDAEIEHGVKEYGNAVKELMKANIFPGDMLYKNFGVTRHGRVVFYDYDEIEYLTDCNVRRVPPPRNEEDELSGEPWYTVGPHDIFPETYGPFLLGDPRVRAVFMKHHADFFEASLWQASKDKLLQGELPDFYPYDVSLRFSVRYPDRFDSTPDAGDGDSAGDAQRAA</sequence>
<accession>B1YNR4</accession>
<reference key="1">
    <citation type="submission" date="2008-04" db="EMBL/GenBank/DDBJ databases">
        <title>Complete sequence of chromosome 1 of Burkholderia ambifaria MC40-6.</title>
        <authorList>
            <person name="Copeland A."/>
            <person name="Lucas S."/>
            <person name="Lapidus A."/>
            <person name="Glavina del Rio T."/>
            <person name="Dalin E."/>
            <person name="Tice H."/>
            <person name="Pitluck S."/>
            <person name="Chain P."/>
            <person name="Malfatti S."/>
            <person name="Shin M."/>
            <person name="Vergez L."/>
            <person name="Lang D."/>
            <person name="Schmutz J."/>
            <person name="Larimer F."/>
            <person name="Land M."/>
            <person name="Hauser L."/>
            <person name="Kyrpides N."/>
            <person name="Lykidis A."/>
            <person name="Ramette A."/>
            <person name="Konstantinidis K."/>
            <person name="Tiedje J."/>
            <person name="Richardson P."/>
        </authorList>
    </citation>
    <scope>NUCLEOTIDE SEQUENCE [LARGE SCALE GENOMIC DNA]</scope>
    <source>
        <strain>MC40-6</strain>
    </source>
</reference>
<feature type="chain" id="PRO_1000133258" description="Isocitrate dehydrogenase kinase/phosphatase">
    <location>
        <begin position="1"/>
        <end position="608"/>
    </location>
</feature>
<feature type="region of interest" description="Disordered" evidence="2">
    <location>
        <begin position="589"/>
        <end position="608"/>
    </location>
</feature>
<feature type="active site" evidence="1">
    <location>
        <position position="383"/>
    </location>
</feature>
<feature type="binding site" evidence="1">
    <location>
        <begin position="327"/>
        <end position="333"/>
    </location>
    <ligand>
        <name>ATP</name>
        <dbReference type="ChEBI" id="CHEBI:30616"/>
    </ligand>
</feature>
<feature type="binding site" evidence="1">
    <location>
        <position position="348"/>
    </location>
    <ligand>
        <name>ATP</name>
        <dbReference type="ChEBI" id="CHEBI:30616"/>
    </ligand>
</feature>
<protein>
    <recommendedName>
        <fullName evidence="1">Isocitrate dehydrogenase kinase/phosphatase</fullName>
        <shortName evidence="1">IDH kinase/phosphatase</shortName>
        <shortName evidence="1">IDHK/P</shortName>
        <ecNumber evidence="1">2.7.11.5</ecNumber>
        <ecNumber evidence="1">3.1.3.-</ecNumber>
    </recommendedName>
</protein>
<evidence type="ECO:0000255" key="1">
    <source>
        <dbReference type="HAMAP-Rule" id="MF_00747"/>
    </source>
</evidence>
<evidence type="ECO:0000256" key="2">
    <source>
        <dbReference type="SAM" id="MobiDB-lite"/>
    </source>
</evidence>
<keyword id="KW-0067">ATP-binding</keyword>
<keyword id="KW-0963">Cytoplasm</keyword>
<keyword id="KW-0329">Glyoxylate bypass</keyword>
<keyword id="KW-0378">Hydrolase</keyword>
<keyword id="KW-0418">Kinase</keyword>
<keyword id="KW-0547">Nucleotide-binding</keyword>
<keyword id="KW-0904">Protein phosphatase</keyword>
<keyword id="KW-0723">Serine/threonine-protein kinase</keyword>
<keyword id="KW-0808">Transferase</keyword>
<keyword id="KW-0816">Tricarboxylic acid cycle</keyword>
<gene>
    <name evidence="1" type="primary">aceK</name>
    <name type="ordered locus">BamMC406_2838</name>
</gene>
<organism>
    <name type="scientific">Burkholderia ambifaria (strain MC40-6)</name>
    <dbReference type="NCBI Taxonomy" id="398577"/>
    <lineage>
        <taxon>Bacteria</taxon>
        <taxon>Pseudomonadati</taxon>
        <taxon>Pseudomonadota</taxon>
        <taxon>Betaproteobacteria</taxon>
        <taxon>Burkholderiales</taxon>
        <taxon>Burkholderiaceae</taxon>
        <taxon>Burkholderia</taxon>
        <taxon>Burkholderia cepacia complex</taxon>
    </lineage>
</organism>
<name>ACEK_BURA4</name>